<name>ATPF_BURVG</name>
<accession>A4JA31</accession>
<comment type="function">
    <text evidence="1">F(1)F(0) ATP synthase produces ATP from ADP in the presence of a proton or sodium gradient. F-type ATPases consist of two structural domains, F(1) containing the extramembraneous catalytic core and F(0) containing the membrane proton channel, linked together by a central stalk and a peripheral stalk. During catalysis, ATP synthesis in the catalytic domain of F(1) is coupled via a rotary mechanism of the central stalk subunits to proton translocation.</text>
</comment>
<comment type="function">
    <text evidence="1">Component of the F(0) channel, it forms part of the peripheral stalk, linking F(1) to F(0).</text>
</comment>
<comment type="subunit">
    <text evidence="1">F-type ATPases have 2 components, F(1) - the catalytic core - and F(0) - the membrane proton channel. F(1) has five subunits: alpha(3), beta(3), gamma(1), delta(1), epsilon(1). F(0) has three main subunits: a(1), b(2) and c(10-14). The alpha and beta chains form an alternating ring which encloses part of the gamma chain. F(1) is attached to F(0) by a central stalk formed by the gamma and epsilon chains, while a peripheral stalk is formed by the delta and b chains.</text>
</comment>
<comment type="subcellular location">
    <subcellularLocation>
        <location evidence="1">Cell inner membrane</location>
        <topology evidence="1">Single-pass membrane protein</topology>
    </subcellularLocation>
</comment>
<comment type="similarity">
    <text evidence="1">Belongs to the ATPase B chain family.</text>
</comment>
<gene>
    <name evidence="1" type="primary">atpF</name>
    <name type="ordered locus">Bcep1808_0111</name>
</gene>
<feature type="chain" id="PRO_0000368397" description="ATP synthase subunit b">
    <location>
        <begin position="1"/>
        <end position="156"/>
    </location>
</feature>
<feature type="transmembrane region" description="Helical" evidence="1">
    <location>
        <begin position="7"/>
        <end position="29"/>
    </location>
</feature>
<evidence type="ECO:0000255" key="1">
    <source>
        <dbReference type="HAMAP-Rule" id="MF_01398"/>
    </source>
</evidence>
<keyword id="KW-0066">ATP synthesis</keyword>
<keyword id="KW-0997">Cell inner membrane</keyword>
<keyword id="KW-1003">Cell membrane</keyword>
<keyword id="KW-0138">CF(0)</keyword>
<keyword id="KW-0375">Hydrogen ion transport</keyword>
<keyword id="KW-0406">Ion transport</keyword>
<keyword id="KW-0472">Membrane</keyword>
<keyword id="KW-0812">Transmembrane</keyword>
<keyword id="KW-1133">Transmembrane helix</keyword>
<keyword id="KW-0813">Transport</keyword>
<organism>
    <name type="scientific">Burkholderia vietnamiensis (strain G4 / LMG 22486)</name>
    <name type="common">Burkholderia cepacia (strain R1808)</name>
    <dbReference type="NCBI Taxonomy" id="269482"/>
    <lineage>
        <taxon>Bacteria</taxon>
        <taxon>Pseudomonadati</taxon>
        <taxon>Pseudomonadota</taxon>
        <taxon>Betaproteobacteria</taxon>
        <taxon>Burkholderiales</taxon>
        <taxon>Burkholderiaceae</taxon>
        <taxon>Burkholderia</taxon>
        <taxon>Burkholderia cepacia complex</taxon>
    </lineage>
</organism>
<dbReference type="EMBL" id="CP000614">
    <property type="protein sequence ID" value="ABO53134.1"/>
    <property type="molecule type" value="Genomic_DNA"/>
</dbReference>
<dbReference type="SMR" id="A4JA31"/>
<dbReference type="KEGG" id="bvi:Bcep1808_0111"/>
<dbReference type="eggNOG" id="COG0711">
    <property type="taxonomic scope" value="Bacteria"/>
</dbReference>
<dbReference type="HOGENOM" id="CLU_079215_4_5_4"/>
<dbReference type="Proteomes" id="UP000002287">
    <property type="component" value="Chromosome 1"/>
</dbReference>
<dbReference type="GO" id="GO:0005886">
    <property type="term" value="C:plasma membrane"/>
    <property type="evidence" value="ECO:0007669"/>
    <property type="project" value="UniProtKB-SubCell"/>
</dbReference>
<dbReference type="GO" id="GO:0045259">
    <property type="term" value="C:proton-transporting ATP synthase complex"/>
    <property type="evidence" value="ECO:0007669"/>
    <property type="project" value="UniProtKB-KW"/>
</dbReference>
<dbReference type="GO" id="GO:0046933">
    <property type="term" value="F:proton-transporting ATP synthase activity, rotational mechanism"/>
    <property type="evidence" value="ECO:0007669"/>
    <property type="project" value="UniProtKB-UniRule"/>
</dbReference>
<dbReference type="GO" id="GO:0046961">
    <property type="term" value="F:proton-transporting ATPase activity, rotational mechanism"/>
    <property type="evidence" value="ECO:0007669"/>
    <property type="project" value="TreeGrafter"/>
</dbReference>
<dbReference type="CDD" id="cd06503">
    <property type="entry name" value="ATP-synt_Fo_b"/>
    <property type="match status" value="1"/>
</dbReference>
<dbReference type="Gene3D" id="6.10.250.1580">
    <property type="match status" value="1"/>
</dbReference>
<dbReference type="HAMAP" id="MF_01398">
    <property type="entry name" value="ATP_synth_b_bprime"/>
    <property type="match status" value="1"/>
</dbReference>
<dbReference type="InterPro" id="IPR028987">
    <property type="entry name" value="ATP_synth_B-like_membr_sf"/>
</dbReference>
<dbReference type="InterPro" id="IPR002146">
    <property type="entry name" value="ATP_synth_b/b'su_bac/chlpt"/>
</dbReference>
<dbReference type="InterPro" id="IPR005864">
    <property type="entry name" value="ATP_synth_F0_bsu_bac"/>
</dbReference>
<dbReference type="InterPro" id="IPR050059">
    <property type="entry name" value="ATP_synthase_B_chain"/>
</dbReference>
<dbReference type="NCBIfam" id="TIGR01144">
    <property type="entry name" value="ATP_synt_b"/>
    <property type="match status" value="1"/>
</dbReference>
<dbReference type="NCBIfam" id="NF004411">
    <property type="entry name" value="PRK05759.1-2"/>
    <property type="match status" value="1"/>
</dbReference>
<dbReference type="PANTHER" id="PTHR33445:SF1">
    <property type="entry name" value="ATP SYNTHASE SUBUNIT B"/>
    <property type="match status" value="1"/>
</dbReference>
<dbReference type="PANTHER" id="PTHR33445">
    <property type="entry name" value="ATP SYNTHASE SUBUNIT B', CHLOROPLASTIC"/>
    <property type="match status" value="1"/>
</dbReference>
<dbReference type="Pfam" id="PF00430">
    <property type="entry name" value="ATP-synt_B"/>
    <property type="match status" value="1"/>
</dbReference>
<dbReference type="SUPFAM" id="SSF81573">
    <property type="entry name" value="F1F0 ATP synthase subunit B, membrane domain"/>
    <property type="match status" value="1"/>
</dbReference>
<reference key="1">
    <citation type="submission" date="2007-03" db="EMBL/GenBank/DDBJ databases">
        <title>Complete sequence of chromosome 1 of Burkholderia vietnamiensis G4.</title>
        <authorList>
            <consortium name="US DOE Joint Genome Institute"/>
            <person name="Copeland A."/>
            <person name="Lucas S."/>
            <person name="Lapidus A."/>
            <person name="Barry K."/>
            <person name="Detter J.C."/>
            <person name="Glavina del Rio T."/>
            <person name="Hammon N."/>
            <person name="Israni S."/>
            <person name="Dalin E."/>
            <person name="Tice H."/>
            <person name="Pitluck S."/>
            <person name="Chain P."/>
            <person name="Malfatti S."/>
            <person name="Shin M."/>
            <person name="Vergez L."/>
            <person name="Schmutz J."/>
            <person name="Larimer F."/>
            <person name="Land M."/>
            <person name="Hauser L."/>
            <person name="Kyrpides N."/>
            <person name="Tiedje J."/>
            <person name="Richardson P."/>
        </authorList>
    </citation>
    <scope>NUCLEOTIDE SEQUENCE [LARGE SCALE GENOMIC DNA]</scope>
    <source>
        <strain>G4 / LMG 22486</strain>
    </source>
</reference>
<sequence>MNLNATLFAQMVVFLVLAWFTMKFVWPPLINALDERSKKIADGLAAAEKGKAELDAAHKRVDQELAQARNDGQQRIADAEKRAQAVAEEIKANAQAEAARIVAQAKAEAEQQIVKARETLRGEVAALAVKGAEQILKREVDQTAHAQLLNQLKAEL</sequence>
<protein>
    <recommendedName>
        <fullName evidence="1">ATP synthase subunit b</fullName>
    </recommendedName>
    <alternativeName>
        <fullName evidence="1">ATP synthase F(0) sector subunit b</fullName>
    </alternativeName>
    <alternativeName>
        <fullName evidence="1">ATPase subunit I</fullName>
    </alternativeName>
    <alternativeName>
        <fullName evidence="1">F-type ATPase subunit b</fullName>
        <shortName evidence="1">F-ATPase subunit b</shortName>
    </alternativeName>
</protein>
<proteinExistence type="inferred from homology"/>